<reference key="1">
    <citation type="journal article" date="2001" name="Nature">
        <title>Complete genome sequence of a multiple drug resistant Salmonella enterica serovar Typhi CT18.</title>
        <authorList>
            <person name="Parkhill J."/>
            <person name="Dougan G."/>
            <person name="James K.D."/>
            <person name="Thomson N.R."/>
            <person name="Pickard D."/>
            <person name="Wain J."/>
            <person name="Churcher C.M."/>
            <person name="Mungall K.L."/>
            <person name="Bentley S.D."/>
            <person name="Holden M.T.G."/>
            <person name="Sebaihia M."/>
            <person name="Baker S."/>
            <person name="Basham D."/>
            <person name="Brooks K."/>
            <person name="Chillingworth T."/>
            <person name="Connerton P."/>
            <person name="Cronin A."/>
            <person name="Davis P."/>
            <person name="Davies R.M."/>
            <person name="Dowd L."/>
            <person name="White N."/>
            <person name="Farrar J."/>
            <person name="Feltwell T."/>
            <person name="Hamlin N."/>
            <person name="Haque A."/>
            <person name="Hien T.T."/>
            <person name="Holroyd S."/>
            <person name="Jagels K."/>
            <person name="Krogh A."/>
            <person name="Larsen T.S."/>
            <person name="Leather S."/>
            <person name="Moule S."/>
            <person name="O'Gaora P."/>
            <person name="Parry C."/>
            <person name="Quail M.A."/>
            <person name="Rutherford K.M."/>
            <person name="Simmonds M."/>
            <person name="Skelton J."/>
            <person name="Stevens K."/>
            <person name="Whitehead S."/>
            <person name="Barrell B.G."/>
        </authorList>
    </citation>
    <scope>NUCLEOTIDE SEQUENCE [LARGE SCALE GENOMIC DNA]</scope>
    <source>
        <strain>CT18</strain>
    </source>
</reference>
<reference key="2">
    <citation type="journal article" date="2003" name="J. Bacteriol.">
        <title>Comparative genomics of Salmonella enterica serovar Typhi strains Ty2 and CT18.</title>
        <authorList>
            <person name="Deng W."/>
            <person name="Liou S.-R."/>
            <person name="Plunkett G. III"/>
            <person name="Mayhew G.F."/>
            <person name="Rose D.J."/>
            <person name="Burland V."/>
            <person name="Kodoyianni V."/>
            <person name="Schwartz D.C."/>
            <person name="Blattner F.R."/>
        </authorList>
    </citation>
    <scope>NUCLEOTIDE SEQUENCE [LARGE SCALE GENOMIC DNA]</scope>
    <source>
        <strain>ATCC 700931 / Ty2</strain>
    </source>
</reference>
<keyword id="KW-0963">Cytoplasm</keyword>
<keyword id="KW-0413">Isomerase</keyword>
<keyword id="KW-0414">Isoprene biosynthesis</keyword>
<keyword id="KW-0460">Magnesium</keyword>
<keyword id="KW-0464">Manganese</keyword>
<keyword id="KW-0479">Metal-binding</keyword>
<name>IDI_SALTI</name>
<protein>
    <recommendedName>
        <fullName evidence="1">Isopentenyl-diphosphate Delta-isomerase</fullName>
        <shortName evidence="1">IPP isomerase</shortName>
        <ecNumber evidence="1">5.3.3.2</ecNumber>
    </recommendedName>
    <alternativeName>
        <fullName evidence="1">IPP:DMAPP isomerase</fullName>
    </alternativeName>
    <alternativeName>
        <fullName evidence="1">Isopentenyl pyrophosphate isomerase</fullName>
    </alternativeName>
</protein>
<feature type="chain" id="PRO_0000205264" description="Isopentenyl-diphosphate Delta-isomerase">
    <location>
        <begin position="1"/>
        <end position="181"/>
    </location>
</feature>
<feature type="domain" description="Nudix hydrolase">
    <location>
        <begin position="30"/>
        <end position="164"/>
    </location>
</feature>
<feature type="active site" evidence="1">
    <location>
        <position position="67"/>
    </location>
</feature>
<feature type="active site" evidence="1">
    <location>
        <position position="116"/>
    </location>
</feature>
<feature type="binding site" evidence="1">
    <location>
        <position position="25"/>
    </location>
    <ligand>
        <name>Mn(2+)</name>
        <dbReference type="ChEBI" id="CHEBI:29035"/>
    </ligand>
</feature>
<feature type="binding site" evidence="1">
    <location>
        <position position="32"/>
    </location>
    <ligand>
        <name>Mn(2+)</name>
        <dbReference type="ChEBI" id="CHEBI:29035"/>
    </ligand>
</feature>
<feature type="binding site" evidence="1">
    <location>
        <position position="67"/>
    </location>
    <ligand>
        <name>Mg(2+)</name>
        <dbReference type="ChEBI" id="CHEBI:18420"/>
    </ligand>
</feature>
<feature type="binding site" evidence="1">
    <location>
        <position position="69"/>
    </location>
    <ligand>
        <name>Mn(2+)</name>
        <dbReference type="ChEBI" id="CHEBI:29035"/>
    </ligand>
</feature>
<feature type="binding site" evidence="1">
    <location>
        <position position="87"/>
    </location>
    <ligand>
        <name>Mg(2+)</name>
        <dbReference type="ChEBI" id="CHEBI:18420"/>
    </ligand>
</feature>
<feature type="binding site" evidence="1">
    <location>
        <position position="114"/>
    </location>
    <ligand>
        <name>Mn(2+)</name>
        <dbReference type="ChEBI" id="CHEBI:29035"/>
    </ligand>
</feature>
<feature type="binding site" evidence="1">
    <location>
        <position position="116"/>
    </location>
    <ligand>
        <name>Mn(2+)</name>
        <dbReference type="ChEBI" id="CHEBI:29035"/>
    </ligand>
</feature>
<dbReference type="EC" id="5.3.3.2" evidence="1"/>
<dbReference type="EMBL" id="AL513382">
    <property type="protein sequence ID" value="CAD02869.1"/>
    <property type="molecule type" value="Genomic_DNA"/>
</dbReference>
<dbReference type="EMBL" id="AE014613">
    <property type="protein sequence ID" value="AAO70509.1"/>
    <property type="molecule type" value="Genomic_DNA"/>
</dbReference>
<dbReference type="RefSeq" id="NP_457437.1">
    <property type="nucleotide sequence ID" value="NC_003198.1"/>
</dbReference>
<dbReference type="RefSeq" id="WP_000133998.1">
    <property type="nucleotide sequence ID" value="NZ_WSUR01000024.1"/>
</dbReference>
<dbReference type="SMR" id="Q8Z3X9"/>
<dbReference type="STRING" id="220341.gene:17587070"/>
<dbReference type="KEGG" id="stt:t2957"/>
<dbReference type="KEGG" id="sty:STY3195"/>
<dbReference type="PATRIC" id="fig|220341.7.peg.3253"/>
<dbReference type="eggNOG" id="COG1443">
    <property type="taxonomic scope" value="Bacteria"/>
</dbReference>
<dbReference type="HOGENOM" id="CLU_060552_2_0_6"/>
<dbReference type="OMA" id="LRLCPWF"/>
<dbReference type="OrthoDB" id="9809458at2"/>
<dbReference type="UniPathway" id="UPA00059">
    <property type="reaction ID" value="UER00104"/>
</dbReference>
<dbReference type="Proteomes" id="UP000000541">
    <property type="component" value="Chromosome"/>
</dbReference>
<dbReference type="Proteomes" id="UP000002670">
    <property type="component" value="Chromosome"/>
</dbReference>
<dbReference type="GO" id="GO:0005737">
    <property type="term" value="C:cytoplasm"/>
    <property type="evidence" value="ECO:0007669"/>
    <property type="project" value="UniProtKB-SubCell"/>
</dbReference>
<dbReference type="GO" id="GO:0004452">
    <property type="term" value="F:isopentenyl-diphosphate delta-isomerase activity"/>
    <property type="evidence" value="ECO:0007669"/>
    <property type="project" value="UniProtKB-UniRule"/>
</dbReference>
<dbReference type="GO" id="GO:0046872">
    <property type="term" value="F:metal ion binding"/>
    <property type="evidence" value="ECO:0007669"/>
    <property type="project" value="UniProtKB-KW"/>
</dbReference>
<dbReference type="GO" id="GO:0050992">
    <property type="term" value="P:dimethylallyl diphosphate biosynthetic process"/>
    <property type="evidence" value="ECO:0007669"/>
    <property type="project" value="UniProtKB-UniRule"/>
</dbReference>
<dbReference type="GO" id="GO:0008299">
    <property type="term" value="P:isoprenoid biosynthetic process"/>
    <property type="evidence" value="ECO:0007669"/>
    <property type="project" value="UniProtKB-KW"/>
</dbReference>
<dbReference type="CDD" id="cd02885">
    <property type="entry name" value="NUDIX_IPP_Isomerase"/>
    <property type="match status" value="1"/>
</dbReference>
<dbReference type="FunFam" id="3.90.79.10:FF:000009">
    <property type="entry name" value="Isopentenyl-diphosphate Delta-isomerase"/>
    <property type="match status" value="1"/>
</dbReference>
<dbReference type="Gene3D" id="3.90.79.10">
    <property type="entry name" value="Nucleoside Triphosphate Pyrophosphohydrolase"/>
    <property type="match status" value="1"/>
</dbReference>
<dbReference type="HAMAP" id="MF_00202">
    <property type="entry name" value="Idi"/>
    <property type="match status" value="1"/>
</dbReference>
<dbReference type="InterPro" id="IPR056375">
    <property type="entry name" value="Idi_bact"/>
</dbReference>
<dbReference type="InterPro" id="IPR011876">
    <property type="entry name" value="IsopentenylPP_isomerase_typ1"/>
</dbReference>
<dbReference type="InterPro" id="IPR015797">
    <property type="entry name" value="NUDIX_hydrolase-like_dom_sf"/>
</dbReference>
<dbReference type="InterPro" id="IPR000086">
    <property type="entry name" value="NUDIX_hydrolase_dom"/>
</dbReference>
<dbReference type="NCBIfam" id="TIGR02150">
    <property type="entry name" value="IPP_isom_1"/>
    <property type="match status" value="1"/>
</dbReference>
<dbReference type="NCBIfam" id="NF002995">
    <property type="entry name" value="PRK03759.1"/>
    <property type="match status" value="1"/>
</dbReference>
<dbReference type="PANTHER" id="PTHR10885">
    <property type="entry name" value="ISOPENTENYL-DIPHOSPHATE DELTA-ISOMERASE"/>
    <property type="match status" value="1"/>
</dbReference>
<dbReference type="PANTHER" id="PTHR10885:SF0">
    <property type="entry name" value="ISOPENTENYL-DIPHOSPHATE DELTA-ISOMERASE"/>
    <property type="match status" value="1"/>
</dbReference>
<dbReference type="Pfam" id="PF00293">
    <property type="entry name" value="NUDIX"/>
    <property type="match status" value="1"/>
</dbReference>
<dbReference type="PIRSF" id="PIRSF018427">
    <property type="entry name" value="Isopntndiph_ism"/>
    <property type="match status" value="1"/>
</dbReference>
<dbReference type="SUPFAM" id="SSF55811">
    <property type="entry name" value="Nudix"/>
    <property type="match status" value="1"/>
</dbReference>
<dbReference type="PROSITE" id="PS51462">
    <property type="entry name" value="NUDIX"/>
    <property type="match status" value="1"/>
</dbReference>
<organism>
    <name type="scientific">Salmonella typhi</name>
    <dbReference type="NCBI Taxonomy" id="90370"/>
    <lineage>
        <taxon>Bacteria</taxon>
        <taxon>Pseudomonadati</taxon>
        <taxon>Pseudomonadota</taxon>
        <taxon>Gammaproteobacteria</taxon>
        <taxon>Enterobacterales</taxon>
        <taxon>Enterobacteriaceae</taxon>
        <taxon>Salmonella</taxon>
    </lineage>
</organism>
<sequence>MTEEHVVLLDEQDKPSGTLEKYAAHTLNTPLHLAFSCWLFNEDGQLLVTRRSLSKKAWPGVWTNSVCGHPQQGETTEEAIIRRCRFELGVEITDLTPVYPHFSYRATDPNGIVENEVCPVFAARATSVLQVNSEEVMDYQWSEFKSVWQSLLATPWAFSPWMVMQASDEQARKRLLNYCQR</sequence>
<comment type="function">
    <text evidence="1">Catalyzes the 1,3-allylic rearrangement of the homoallylic substrate isopentenyl (IPP) to its highly electrophilic allylic isomer, dimethylallyl diphosphate (DMAPP).</text>
</comment>
<comment type="catalytic activity">
    <reaction evidence="1">
        <text>isopentenyl diphosphate = dimethylallyl diphosphate</text>
        <dbReference type="Rhea" id="RHEA:23284"/>
        <dbReference type="ChEBI" id="CHEBI:57623"/>
        <dbReference type="ChEBI" id="CHEBI:128769"/>
        <dbReference type="EC" id="5.3.3.2"/>
    </reaction>
</comment>
<comment type="cofactor">
    <cofactor evidence="1">
        <name>Mg(2+)</name>
        <dbReference type="ChEBI" id="CHEBI:18420"/>
    </cofactor>
    <text evidence="1">Binds 1 Mg(2+) ion per subunit. The magnesium ion binds only when substrate is bound.</text>
</comment>
<comment type="cofactor">
    <cofactor evidence="1">
        <name>Mn(2+)</name>
        <dbReference type="ChEBI" id="CHEBI:29035"/>
    </cofactor>
    <text evidence="1">Binds 1 Mn(2+) ion per subunit.</text>
</comment>
<comment type="pathway">
    <text evidence="1">Isoprenoid biosynthesis; dimethylallyl diphosphate biosynthesis; dimethylallyl diphosphate from isopentenyl diphosphate: step 1/1.</text>
</comment>
<comment type="subunit">
    <text evidence="1">Homodimer.</text>
</comment>
<comment type="subcellular location">
    <subcellularLocation>
        <location evidence="1">Cytoplasm</location>
    </subcellularLocation>
</comment>
<comment type="similarity">
    <text evidence="1">Belongs to the IPP isomerase type 1 family.</text>
</comment>
<gene>
    <name evidence="1" type="primary">idi</name>
    <name type="ordered locus">STY3195</name>
    <name type="ordered locus">t2957</name>
</gene>
<evidence type="ECO:0000255" key="1">
    <source>
        <dbReference type="HAMAP-Rule" id="MF_00202"/>
    </source>
</evidence>
<proteinExistence type="inferred from homology"/>
<accession>Q8Z3X9</accession>